<name>MURA_BORBU</name>
<reference key="1">
    <citation type="journal article" date="1997" name="Nature">
        <title>Genomic sequence of a Lyme disease spirochaete, Borrelia burgdorferi.</title>
        <authorList>
            <person name="Fraser C.M."/>
            <person name="Casjens S."/>
            <person name="Huang W.M."/>
            <person name="Sutton G.G."/>
            <person name="Clayton R.A."/>
            <person name="Lathigra R."/>
            <person name="White O."/>
            <person name="Ketchum K.A."/>
            <person name="Dodson R.J."/>
            <person name="Hickey E.K."/>
            <person name="Gwinn M.L."/>
            <person name="Dougherty B.A."/>
            <person name="Tomb J.-F."/>
            <person name="Fleischmann R.D."/>
            <person name="Richardson D.L."/>
            <person name="Peterson J.D."/>
            <person name="Kerlavage A.R."/>
            <person name="Quackenbush J."/>
            <person name="Salzberg S.L."/>
            <person name="Hanson M."/>
            <person name="van Vugt R."/>
            <person name="Palmer N."/>
            <person name="Adams M.D."/>
            <person name="Gocayne J.D."/>
            <person name="Weidman J.F."/>
            <person name="Utterback T.R."/>
            <person name="Watthey L."/>
            <person name="McDonald L.A."/>
            <person name="Artiach P."/>
            <person name="Bowman C."/>
            <person name="Garland S.A."/>
            <person name="Fujii C."/>
            <person name="Cotton M.D."/>
            <person name="Horst K."/>
            <person name="Roberts K.M."/>
            <person name="Hatch B."/>
            <person name="Smith H.O."/>
            <person name="Venter J.C."/>
        </authorList>
    </citation>
    <scope>NUCLEOTIDE SEQUENCE [LARGE SCALE GENOMIC DNA]</scope>
    <source>
        <strain>ATCC 35210 / DSM 4680 / CIP 102532 / B31</strain>
    </source>
</reference>
<organism>
    <name type="scientific">Borreliella burgdorferi (strain ATCC 35210 / DSM 4680 / CIP 102532 / B31)</name>
    <name type="common">Borrelia burgdorferi</name>
    <dbReference type="NCBI Taxonomy" id="224326"/>
    <lineage>
        <taxon>Bacteria</taxon>
        <taxon>Pseudomonadati</taxon>
        <taxon>Spirochaetota</taxon>
        <taxon>Spirochaetia</taxon>
        <taxon>Spirochaetales</taxon>
        <taxon>Borreliaceae</taxon>
        <taxon>Borreliella</taxon>
    </lineage>
</organism>
<sequence>MHSYIVEGGYKIGGQITASGNKNAALPCILAALLTDEEVILENIPNINDVKVVLDILNDIGADIAREGNTLKIKVLNIVKTEIDSSFTDLIRASILLLGPFVSRFGKIDMALPGGDVIGKRRLDTHFYGLCKLGAKLSTKDRRIVLKANKLVGAEMFLDEASVTATENIIMAAVLAEGNTVIMNAACEPHVQDLCNMLNSMGANILGIGSNVLEIKGVKKLSGTVFRIGADFMQVGSLISLAALTGGELEIKKADPQHFRLIRHVYSRLGINFEYDRENVYVRNKQELKVKLDFGGHIPKIDDGPWPAFPTDLMSIIVVTATQVEGTVLVFEKMFESRMFFVDKLIKMGARIVLCDPHRVVVTGKSSLKGNVLSSPDVRAGMSLLIAAFVAEGRSEIQNVYQIERGYEDVVNKLINLGAKIKKVKSQ</sequence>
<proteinExistence type="inferred from homology"/>
<gene>
    <name evidence="1" type="primary">murA</name>
    <name type="ordered locus">BB_0472</name>
</gene>
<feature type="chain" id="PRO_0000178850" description="UDP-N-acetylglucosamine 1-carboxyvinyltransferase">
    <location>
        <begin position="1"/>
        <end position="427"/>
    </location>
</feature>
<feature type="active site" description="Proton donor" evidence="1">
    <location>
        <position position="116"/>
    </location>
</feature>
<feature type="binding site" evidence="1">
    <location>
        <begin position="22"/>
        <end position="23"/>
    </location>
    <ligand>
        <name>phosphoenolpyruvate</name>
        <dbReference type="ChEBI" id="CHEBI:58702"/>
    </ligand>
</feature>
<feature type="binding site" evidence="1">
    <location>
        <position position="92"/>
    </location>
    <ligand>
        <name>UDP-N-acetyl-alpha-D-glucosamine</name>
        <dbReference type="ChEBI" id="CHEBI:57705"/>
    </ligand>
</feature>
<feature type="binding site" evidence="1">
    <location>
        <position position="312"/>
    </location>
    <ligand>
        <name>UDP-N-acetyl-alpha-D-glucosamine</name>
        <dbReference type="ChEBI" id="CHEBI:57705"/>
    </ligand>
</feature>
<feature type="binding site" evidence="1">
    <location>
        <position position="334"/>
    </location>
    <ligand>
        <name>UDP-N-acetyl-alpha-D-glucosamine</name>
        <dbReference type="ChEBI" id="CHEBI:57705"/>
    </ligand>
</feature>
<comment type="function">
    <text evidence="1">Cell wall formation. Adds enolpyruvyl to UDP-N-acetylglucosamine.</text>
</comment>
<comment type="catalytic activity">
    <reaction evidence="1">
        <text>phosphoenolpyruvate + UDP-N-acetyl-alpha-D-glucosamine = UDP-N-acetyl-3-O-(1-carboxyvinyl)-alpha-D-glucosamine + phosphate</text>
        <dbReference type="Rhea" id="RHEA:18681"/>
        <dbReference type="ChEBI" id="CHEBI:43474"/>
        <dbReference type="ChEBI" id="CHEBI:57705"/>
        <dbReference type="ChEBI" id="CHEBI:58702"/>
        <dbReference type="ChEBI" id="CHEBI:68483"/>
        <dbReference type="EC" id="2.5.1.7"/>
    </reaction>
</comment>
<comment type="pathway">
    <text evidence="1">Cell wall biogenesis; peptidoglycan biosynthesis.</text>
</comment>
<comment type="subcellular location">
    <subcellularLocation>
        <location evidence="1">Cytoplasm</location>
    </subcellularLocation>
</comment>
<comment type="similarity">
    <text evidence="1">Belongs to the EPSP synthase family. MurA subfamily.</text>
</comment>
<dbReference type="EC" id="2.5.1.7" evidence="1"/>
<dbReference type="EMBL" id="AE000783">
    <property type="protein sequence ID" value="AAC66824.2"/>
    <property type="molecule type" value="Genomic_DNA"/>
</dbReference>
<dbReference type="PIR" id="G70158">
    <property type="entry name" value="G70158"/>
</dbReference>
<dbReference type="RefSeq" id="NP_212606.2">
    <property type="nucleotide sequence ID" value="NC_001318.1"/>
</dbReference>
<dbReference type="RefSeq" id="WP_002656466.1">
    <property type="nucleotide sequence ID" value="NC_001318.1"/>
</dbReference>
<dbReference type="SMR" id="O51428"/>
<dbReference type="STRING" id="224326.BB_0472"/>
<dbReference type="PaxDb" id="224326-BB_0472"/>
<dbReference type="EnsemblBacteria" id="AAC66824">
    <property type="protein sequence ID" value="AAC66824"/>
    <property type="gene ID" value="BB_0472"/>
</dbReference>
<dbReference type="GeneID" id="56567908"/>
<dbReference type="KEGG" id="bbu:BB_0472"/>
<dbReference type="PATRIC" id="fig|224326.49.peg.864"/>
<dbReference type="HOGENOM" id="CLU_027387_0_1_12"/>
<dbReference type="OrthoDB" id="9803760at2"/>
<dbReference type="UniPathway" id="UPA00219"/>
<dbReference type="Proteomes" id="UP000001807">
    <property type="component" value="Chromosome"/>
</dbReference>
<dbReference type="GO" id="GO:0005829">
    <property type="term" value="C:cytosol"/>
    <property type="evidence" value="ECO:0000314"/>
    <property type="project" value="CAFA"/>
</dbReference>
<dbReference type="GO" id="GO:0008760">
    <property type="term" value="F:UDP-N-acetylglucosamine 1-carboxyvinyltransferase activity"/>
    <property type="evidence" value="ECO:0007669"/>
    <property type="project" value="UniProtKB-UniRule"/>
</dbReference>
<dbReference type="GO" id="GO:0051301">
    <property type="term" value="P:cell division"/>
    <property type="evidence" value="ECO:0007669"/>
    <property type="project" value="UniProtKB-KW"/>
</dbReference>
<dbReference type="GO" id="GO:0071555">
    <property type="term" value="P:cell wall organization"/>
    <property type="evidence" value="ECO:0007669"/>
    <property type="project" value="UniProtKB-KW"/>
</dbReference>
<dbReference type="GO" id="GO:0009252">
    <property type="term" value="P:peptidoglycan biosynthetic process"/>
    <property type="evidence" value="ECO:0007669"/>
    <property type="project" value="UniProtKB-UniRule"/>
</dbReference>
<dbReference type="GO" id="GO:0008360">
    <property type="term" value="P:regulation of cell shape"/>
    <property type="evidence" value="ECO:0007669"/>
    <property type="project" value="UniProtKB-KW"/>
</dbReference>
<dbReference type="GO" id="GO:0019277">
    <property type="term" value="P:UDP-N-acetylgalactosamine biosynthetic process"/>
    <property type="evidence" value="ECO:0007669"/>
    <property type="project" value="InterPro"/>
</dbReference>
<dbReference type="CDD" id="cd01555">
    <property type="entry name" value="UdpNAET"/>
    <property type="match status" value="1"/>
</dbReference>
<dbReference type="FunFam" id="3.65.10.10:FF:000001">
    <property type="entry name" value="UDP-N-acetylglucosamine 1-carboxyvinyltransferase"/>
    <property type="match status" value="1"/>
</dbReference>
<dbReference type="Gene3D" id="3.65.10.10">
    <property type="entry name" value="Enolpyruvate transferase domain"/>
    <property type="match status" value="2"/>
</dbReference>
<dbReference type="HAMAP" id="MF_00111">
    <property type="entry name" value="MurA"/>
    <property type="match status" value="1"/>
</dbReference>
<dbReference type="InterPro" id="IPR001986">
    <property type="entry name" value="Enolpyruvate_Tfrase_dom"/>
</dbReference>
<dbReference type="InterPro" id="IPR036968">
    <property type="entry name" value="Enolpyruvate_Tfrase_sf"/>
</dbReference>
<dbReference type="InterPro" id="IPR050068">
    <property type="entry name" value="MurA_subfamily"/>
</dbReference>
<dbReference type="InterPro" id="IPR013792">
    <property type="entry name" value="RNA3'P_cycl/enolpyr_Trfase_a/b"/>
</dbReference>
<dbReference type="InterPro" id="IPR005750">
    <property type="entry name" value="UDP_GlcNAc_COvinyl_MurA"/>
</dbReference>
<dbReference type="NCBIfam" id="TIGR01072">
    <property type="entry name" value="murA"/>
    <property type="match status" value="1"/>
</dbReference>
<dbReference type="NCBIfam" id="NF006873">
    <property type="entry name" value="PRK09369.1"/>
    <property type="match status" value="1"/>
</dbReference>
<dbReference type="PANTHER" id="PTHR43783">
    <property type="entry name" value="UDP-N-ACETYLGLUCOSAMINE 1-CARBOXYVINYLTRANSFERASE"/>
    <property type="match status" value="1"/>
</dbReference>
<dbReference type="PANTHER" id="PTHR43783:SF1">
    <property type="entry name" value="UDP-N-ACETYLGLUCOSAMINE 1-CARBOXYVINYLTRANSFERASE"/>
    <property type="match status" value="1"/>
</dbReference>
<dbReference type="Pfam" id="PF00275">
    <property type="entry name" value="EPSP_synthase"/>
    <property type="match status" value="1"/>
</dbReference>
<dbReference type="SUPFAM" id="SSF55205">
    <property type="entry name" value="EPT/RTPC-like"/>
    <property type="match status" value="1"/>
</dbReference>
<accession>O51428</accession>
<protein>
    <recommendedName>
        <fullName evidence="1">UDP-N-acetylglucosamine 1-carboxyvinyltransferase</fullName>
        <ecNumber evidence="1">2.5.1.7</ecNumber>
    </recommendedName>
    <alternativeName>
        <fullName evidence="1">Enoylpyruvate transferase</fullName>
    </alternativeName>
    <alternativeName>
        <fullName evidence="1">UDP-N-acetylglucosamine enolpyruvyl transferase</fullName>
        <shortName evidence="1">EPT</shortName>
    </alternativeName>
</protein>
<keyword id="KW-0131">Cell cycle</keyword>
<keyword id="KW-0132">Cell division</keyword>
<keyword id="KW-0133">Cell shape</keyword>
<keyword id="KW-0961">Cell wall biogenesis/degradation</keyword>
<keyword id="KW-0963">Cytoplasm</keyword>
<keyword id="KW-0573">Peptidoglycan synthesis</keyword>
<keyword id="KW-1185">Reference proteome</keyword>
<keyword id="KW-0808">Transferase</keyword>
<evidence type="ECO:0000255" key="1">
    <source>
        <dbReference type="HAMAP-Rule" id="MF_00111"/>
    </source>
</evidence>